<evidence type="ECO:0000255" key="1">
    <source>
        <dbReference type="HAMAP-Rule" id="MF_01026"/>
    </source>
</evidence>
<evidence type="ECO:0000305" key="2"/>
<dbReference type="EC" id="4.2.1.33" evidence="1"/>
<dbReference type="EMBL" id="CP000125">
    <property type="protein sequence ID" value="ABA52671.1"/>
    <property type="status" value="ALT_INIT"/>
    <property type="molecule type" value="Genomic_DNA"/>
</dbReference>
<dbReference type="RefSeq" id="WP_004528981.1">
    <property type="nucleotide sequence ID" value="NC_007435.1"/>
</dbReference>
<dbReference type="SMR" id="Q3JKG6"/>
<dbReference type="EnsemblBacteria" id="ABA52671">
    <property type="protein sequence ID" value="ABA52671"/>
    <property type="gene ID" value="BURPS1710b_A0778"/>
</dbReference>
<dbReference type="GeneID" id="93063906"/>
<dbReference type="KEGG" id="bpm:BURPS1710b_A0778"/>
<dbReference type="HOGENOM" id="CLU_006714_3_4_4"/>
<dbReference type="UniPathway" id="UPA00048">
    <property type="reaction ID" value="UER00071"/>
</dbReference>
<dbReference type="Proteomes" id="UP000002700">
    <property type="component" value="Chromosome II"/>
</dbReference>
<dbReference type="GO" id="GO:0003861">
    <property type="term" value="F:3-isopropylmalate dehydratase activity"/>
    <property type="evidence" value="ECO:0007669"/>
    <property type="project" value="UniProtKB-UniRule"/>
</dbReference>
<dbReference type="GO" id="GO:0051539">
    <property type="term" value="F:4 iron, 4 sulfur cluster binding"/>
    <property type="evidence" value="ECO:0007669"/>
    <property type="project" value="UniProtKB-KW"/>
</dbReference>
<dbReference type="GO" id="GO:0046872">
    <property type="term" value="F:metal ion binding"/>
    <property type="evidence" value="ECO:0007669"/>
    <property type="project" value="UniProtKB-KW"/>
</dbReference>
<dbReference type="GO" id="GO:0009098">
    <property type="term" value="P:L-leucine biosynthetic process"/>
    <property type="evidence" value="ECO:0007669"/>
    <property type="project" value="UniProtKB-UniRule"/>
</dbReference>
<dbReference type="CDD" id="cd01583">
    <property type="entry name" value="IPMI"/>
    <property type="match status" value="1"/>
</dbReference>
<dbReference type="FunFam" id="3.30.499.10:FF:000007">
    <property type="entry name" value="3-isopropylmalate dehydratase large subunit"/>
    <property type="match status" value="1"/>
</dbReference>
<dbReference type="Gene3D" id="3.30.499.10">
    <property type="entry name" value="Aconitase, domain 3"/>
    <property type="match status" value="2"/>
</dbReference>
<dbReference type="HAMAP" id="MF_01026">
    <property type="entry name" value="LeuC_type1"/>
    <property type="match status" value="1"/>
</dbReference>
<dbReference type="InterPro" id="IPR004430">
    <property type="entry name" value="3-IsopropMal_deHydase_lsu"/>
</dbReference>
<dbReference type="InterPro" id="IPR015931">
    <property type="entry name" value="Acnase/IPM_dHydase_lsu_aba_1/3"/>
</dbReference>
<dbReference type="InterPro" id="IPR001030">
    <property type="entry name" value="Acoase/IPM_deHydtase_lsu_aba"/>
</dbReference>
<dbReference type="InterPro" id="IPR018136">
    <property type="entry name" value="Aconitase_4Fe-4S_BS"/>
</dbReference>
<dbReference type="InterPro" id="IPR036008">
    <property type="entry name" value="Aconitase_4Fe-4S_dom"/>
</dbReference>
<dbReference type="InterPro" id="IPR050067">
    <property type="entry name" value="IPM_dehydratase_rel_enz"/>
</dbReference>
<dbReference type="InterPro" id="IPR033941">
    <property type="entry name" value="IPMI_cat"/>
</dbReference>
<dbReference type="NCBIfam" id="TIGR00170">
    <property type="entry name" value="leuC"/>
    <property type="match status" value="1"/>
</dbReference>
<dbReference type="NCBIfam" id="NF004016">
    <property type="entry name" value="PRK05478.1"/>
    <property type="match status" value="1"/>
</dbReference>
<dbReference type="NCBIfam" id="NF009116">
    <property type="entry name" value="PRK12466.1"/>
    <property type="match status" value="1"/>
</dbReference>
<dbReference type="PANTHER" id="PTHR43822:SF9">
    <property type="entry name" value="3-ISOPROPYLMALATE DEHYDRATASE"/>
    <property type="match status" value="1"/>
</dbReference>
<dbReference type="PANTHER" id="PTHR43822">
    <property type="entry name" value="HOMOACONITASE, MITOCHONDRIAL-RELATED"/>
    <property type="match status" value="1"/>
</dbReference>
<dbReference type="Pfam" id="PF00330">
    <property type="entry name" value="Aconitase"/>
    <property type="match status" value="1"/>
</dbReference>
<dbReference type="PRINTS" id="PR00415">
    <property type="entry name" value="ACONITASE"/>
</dbReference>
<dbReference type="SUPFAM" id="SSF53732">
    <property type="entry name" value="Aconitase iron-sulfur domain"/>
    <property type="match status" value="1"/>
</dbReference>
<dbReference type="PROSITE" id="PS00450">
    <property type="entry name" value="ACONITASE_1"/>
    <property type="match status" value="1"/>
</dbReference>
<dbReference type="PROSITE" id="PS01244">
    <property type="entry name" value="ACONITASE_2"/>
    <property type="match status" value="1"/>
</dbReference>
<feature type="chain" id="PRO_0000319812" description="3-isopropylmalate dehydratase large subunit">
    <location>
        <begin position="1"/>
        <end position="469"/>
    </location>
</feature>
<feature type="binding site" evidence="1">
    <location>
        <position position="347"/>
    </location>
    <ligand>
        <name>[4Fe-4S] cluster</name>
        <dbReference type="ChEBI" id="CHEBI:49883"/>
    </ligand>
</feature>
<feature type="binding site" evidence="1">
    <location>
        <position position="410"/>
    </location>
    <ligand>
        <name>[4Fe-4S] cluster</name>
        <dbReference type="ChEBI" id="CHEBI:49883"/>
    </ligand>
</feature>
<feature type="binding site" evidence="1">
    <location>
        <position position="413"/>
    </location>
    <ligand>
        <name>[4Fe-4S] cluster</name>
        <dbReference type="ChEBI" id="CHEBI:49883"/>
    </ligand>
</feature>
<organism>
    <name type="scientific">Burkholderia pseudomallei (strain 1710b)</name>
    <dbReference type="NCBI Taxonomy" id="320372"/>
    <lineage>
        <taxon>Bacteria</taxon>
        <taxon>Pseudomonadati</taxon>
        <taxon>Pseudomonadota</taxon>
        <taxon>Betaproteobacteria</taxon>
        <taxon>Burkholderiales</taxon>
        <taxon>Burkholderiaceae</taxon>
        <taxon>Burkholderia</taxon>
        <taxon>pseudomallei group</taxon>
    </lineage>
</organism>
<reference key="1">
    <citation type="journal article" date="2010" name="Genome Biol. Evol.">
        <title>Continuing evolution of Burkholderia mallei through genome reduction and large-scale rearrangements.</title>
        <authorList>
            <person name="Losada L."/>
            <person name="Ronning C.M."/>
            <person name="DeShazer D."/>
            <person name="Woods D."/>
            <person name="Fedorova N."/>
            <person name="Kim H.S."/>
            <person name="Shabalina S.A."/>
            <person name="Pearson T.R."/>
            <person name="Brinkac L."/>
            <person name="Tan P."/>
            <person name="Nandi T."/>
            <person name="Crabtree J."/>
            <person name="Badger J."/>
            <person name="Beckstrom-Sternberg S."/>
            <person name="Saqib M."/>
            <person name="Schutzer S.E."/>
            <person name="Keim P."/>
            <person name="Nierman W.C."/>
        </authorList>
    </citation>
    <scope>NUCLEOTIDE SEQUENCE [LARGE SCALE GENOMIC DNA]</scope>
    <source>
        <strain>1710b</strain>
    </source>
</reference>
<accession>Q3JKG6</accession>
<sequence length="469" mass="50803">MAQTLYDKLWNSHVVHTEEDGTALLYIDRQLLHEVTSPQAFEGLKLAQRPVWRISANLAVSDHNVPTTDRSHGIADPVSKLQVDTLDANCDAYGITQFKMNDVRQGIVHIIGPEQGATLPGMTIVCGDSHTSTHGAFGALAHGIGTSEVEHVLATQTLLQKKSKNMLVKVEGQLPRGCTAKDIVLAIIGRIGTAGGTGYAIEFGGSTIRALTMEGRMTVCNMAIEAGARAGMVAVDDTTVEYLKGRPFVPTGAEWDQAVEYWKTFRSDEGAQFDRVVELDAAQIVPQVTWGTSPEMVTSIDGRVPDPEREKDPVKRDAMERALAYMALAPNTPIEAIKVDKIFIGSCTNARIEDIRAAAYVVKKLNRRVAPNVRLAMVVPGSGLVKAQAEREGLDKVFTEAGFEWREPGCSMCLAMNADRLEPGERCASTSNRNFEGRQGQGGRTHLVSPAMAAAAAIEGHFVDIRRLG</sequence>
<comment type="function">
    <text evidence="1">Catalyzes the isomerization between 2-isopropylmalate and 3-isopropylmalate, via the formation of 2-isopropylmaleate.</text>
</comment>
<comment type="catalytic activity">
    <reaction evidence="1">
        <text>(2R,3S)-3-isopropylmalate = (2S)-2-isopropylmalate</text>
        <dbReference type="Rhea" id="RHEA:32287"/>
        <dbReference type="ChEBI" id="CHEBI:1178"/>
        <dbReference type="ChEBI" id="CHEBI:35121"/>
        <dbReference type="EC" id="4.2.1.33"/>
    </reaction>
</comment>
<comment type="cofactor">
    <cofactor evidence="1">
        <name>[4Fe-4S] cluster</name>
        <dbReference type="ChEBI" id="CHEBI:49883"/>
    </cofactor>
    <text evidence="1">Binds 1 [4Fe-4S] cluster per subunit.</text>
</comment>
<comment type="pathway">
    <text evidence="1">Amino-acid biosynthesis; L-leucine biosynthesis; L-leucine from 3-methyl-2-oxobutanoate: step 2/4.</text>
</comment>
<comment type="subunit">
    <text evidence="1">Heterodimer of LeuC and LeuD.</text>
</comment>
<comment type="similarity">
    <text evidence="1">Belongs to the aconitase/IPM isomerase family. LeuC type 1 subfamily.</text>
</comment>
<comment type="sequence caution" evidence="2">
    <conflict type="erroneous initiation">
        <sequence resource="EMBL-CDS" id="ABA52671"/>
    </conflict>
</comment>
<keyword id="KW-0004">4Fe-4S</keyword>
<keyword id="KW-0028">Amino-acid biosynthesis</keyword>
<keyword id="KW-0100">Branched-chain amino acid biosynthesis</keyword>
<keyword id="KW-0408">Iron</keyword>
<keyword id="KW-0411">Iron-sulfur</keyword>
<keyword id="KW-0432">Leucine biosynthesis</keyword>
<keyword id="KW-0456">Lyase</keyword>
<keyword id="KW-0479">Metal-binding</keyword>
<gene>
    <name evidence="1" type="primary">leuC</name>
    <name type="ordered locus">BURPS1710b_A0778</name>
</gene>
<protein>
    <recommendedName>
        <fullName evidence="1">3-isopropylmalate dehydratase large subunit</fullName>
        <ecNumber evidence="1">4.2.1.33</ecNumber>
    </recommendedName>
    <alternativeName>
        <fullName evidence="1">Alpha-IPM isomerase</fullName>
        <shortName evidence="1">IPMI</shortName>
    </alternativeName>
    <alternativeName>
        <fullName evidence="1">Isopropylmalate isomerase</fullName>
    </alternativeName>
</protein>
<name>LEUC_BURP1</name>
<proteinExistence type="inferred from homology"/>